<feature type="chain" id="PRO_0000048156" description="Tubulin alpha chain">
    <location>
        <begin position="1"/>
        <end position="451"/>
    </location>
</feature>
<feature type="region of interest" description="Disordered" evidence="3">
    <location>
        <begin position="432"/>
        <end position="451"/>
    </location>
</feature>
<feature type="active site" evidence="2">
    <location>
        <position position="254"/>
    </location>
</feature>
<feature type="binding site" evidence="2">
    <location>
        <position position="11"/>
    </location>
    <ligand>
        <name>GTP</name>
        <dbReference type="ChEBI" id="CHEBI:37565"/>
    </ligand>
</feature>
<feature type="binding site" evidence="2">
    <location>
        <position position="71"/>
    </location>
    <ligand>
        <name>GTP</name>
        <dbReference type="ChEBI" id="CHEBI:37565"/>
    </ligand>
</feature>
<feature type="binding site" evidence="2">
    <location>
        <position position="71"/>
    </location>
    <ligand>
        <name>Mg(2+)</name>
        <dbReference type="ChEBI" id="CHEBI:18420"/>
    </ligand>
</feature>
<feature type="binding site" evidence="2">
    <location>
        <position position="144"/>
    </location>
    <ligand>
        <name>GTP</name>
        <dbReference type="ChEBI" id="CHEBI:37565"/>
    </ligand>
</feature>
<feature type="binding site" evidence="2">
    <location>
        <position position="145"/>
    </location>
    <ligand>
        <name>GTP</name>
        <dbReference type="ChEBI" id="CHEBI:37565"/>
    </ligand>
</feature>
<feature type="binding site" evidence="2">
    <location>
        <position position="179"/>
    </location>
    <ligand>
        <name>GTP</name>
        <dbReference type="ChEBI" id="CHEBI:37565"/>
    </ligand>
</feature>
<feature type="binding site" evidence="2">
    <location>
        <position position="206"/>
    </location>
    <ligand>
        <name>GTP</name>
        <dbReference type="ChEBI" id="CHEBI:37565"/>
    </ligand>
</feature>
<feature type="binding site" evidence="2">
    <location>
        <position position="228"/>
    </location>
    <ligand>
        <name>GTP</name>
        <dbReference type="ChEBI" id="CHEBI:37565"/>
    </ligand>
</feature>
<feature type="site" description="Involved in polymerization">
    <location>
        <position position="451"/>
    </location>
</feature>
<feature type="modified residue" description="N6-acetyllysine" evidence="1">
    <location>
        <position position="40"/>
    </location>
</feature>
<keyword id="KW-0007">Acetylation</keyword>
<keyword id="KW-0963">Cytoplasm</keyword>
<keyword id="KW-0206">Cytoskeleton</keyword>
<keyword id="KW-0342">GTP-binding</keyword>
<keyword id="KW-0378">Hydrolase</keyword>
<keyword id="KW-0460">Magnesium</keyword>
<keyword id="KW-0479">Metal-binding</keyword>
<keyword id="KW-0493">Microtubule</keyword>
<keyword id="KW-0547">Nucleotide-binding</keyword>
<sequence length="451" mass="49641">MRECISVHIGQAGIQIGNACWELYCLEHGIQPNGQMPSDKTVGGGDDAFNTFFSETGAGKHVPRAIFVDLEPTVIDEVRTGTYRQLFHPEQLISGKEDAANNFARGHYTIGKEIVDLCLDRIRKLADNCTGLQGFLVFNAVGGGTGSGLGSLLLERLSVDYGKKSKLGFTVYPSPQISTSVVEPYNSVLSTHSLLEHTDVSVLLDNEAIYDICKRSLDIERPTYTNLNRLVSQVISSLTASLRFDGALNVDVTEFQTNLVPYPRIHFMLSSYAPVISAEKAYHEQLSVAEITNSAFEPSSMMAKCDPRHGKYMACCLMYRGDVVPKDVNAAVGTIKTKRTIQFVDWCPTGFKCGINYQAPTVVPGGDLAKVQRAVCMISNSTSVAEVFSRIDTKFDLMYSKRAFVHWYVGEGMEEGEFSEAREDLAALEKDYEEVGAESAEGDDEDEGEDY</sequence>
<gene>
    <name type="primary">TBA</name>
</gene>
<evidence type="ECO:0000250" key="1"/>
<evidence type="ECO:0000250" key="2">
    <source>
        <dbReference type="UniProtKB" id="P68363"/>
    </source>
</evidence>
<evidence type="ECO:0000256" key="3">
    <source>
        <dbReference type="SAM" id="MobiDB-lite"/>
    </source>
</evidence>
<evidence type="ECO:0000305" key="4"/>
<reference key="1">
    <citation type="journal article" date="2001" name="Plant Sci.">
        <title>Regulation of anthocyanin biosynthesis in UV-A-irradiated cell cultures of carrot and in organs of intact carrot plants.</title>
        <authorList>
            <person name="Hirner A.A."/>
            <person name="Veit S."/>
            <person name="Seitz H.U."/>
        </authorList>
    </citation>
    <scope>NUCLEOTIDE SEQUENCE [MRNA]</scope>
</reference>
<proteinExistence type="evidence at transcript level"/>
<dbReference type="EC" id="3.6.5.-" evidence="2"/>
<dbReference type="EMBL" id="AY007250">
    <property type="protein sequence ID" value="AAG02564.1"/>
    <property type="molecule type" value="mRNA"/>
</dbReference>
<dbReference type="SMR" id="Q9FT36"/>
<dbReference type="GO" id="GO:0005737">
    <property type="term" value="C:cytoplasm"/>
    <property type="evidence" value="ECO:0007669"/>
    <property type="project" value="UniProtKB-KW"/>
</dbReference>
<dbReference type="GO" id="GO:0005874">
    <property type="term" value="C:microtubule"/>
    <property type="evidence" value="ECO:0007669"/>
    <property type="project" value="UniProtKB-KW"/>
</dbReference>
<dbReference type="GO" id="GO:0005525">
    <property type="term" value="F:GTP binding"/>
    <property type="evidence" value="ECO:0007669"/>
    <property type="project" value="UniProtKB-KW"/>
</dbReference>
<dbReference type="GO" id="GO:0016787">
    <property type="term" value="F:hydrolase activity"/>
    <property type="evidence" value="ECO:0007669"/>
    <property type="project" value="UniProtKB-KW"/>
</dbReference>
<dbReference type="GO" id="GO:0046872">
    <property type="term" value="F:metal ion binding"/>
    <property type="evidence" value="ECO:0007669"/>
    <property type="project" value="UniProtKB-KW"/>
</dbReference>
<dbReference type="GO" id="GO:0005200">
    <property type="term" value="F:structural constituent of cytoskeleton"/>
    <property type="evidence" value="ECO:0007669"/>
    <property type="project" value="InterPro"/>
</dbReference>
<dbReference type="GO" id="GO:0007017">
    <property type="term" value="P:microtubule-based process"/>
    <property type="evidence" value="ECO:0007669"/>
    <property type="project" value="InterPro"/>
</dbReference>
<dbReference type="CDD" id="cd02186">
    <property type="entry name" value="alpha_tubulin"/>
    <property type="match status" value="1"/>
</dbReference>
<dbReference type="FunFam" id="1.10.287.600:FF:000005">
    <property type="entry name" value="Tubulin alpha chain"/>
    <property type="match status" value="1"/>
</dbReference>
<dbReference type="FunFam" id="3.30.1330.20:FF:000001">
    <property type="entry name" value="Tubulin alpha chain"/>
    <property type="match status" value="1"/>
</dbReference>
<dbReference type="FunFam" id="3.40.50.1440:FF:000004">
    <property type="entry name" value="Tubulin alpha chain"/>
    <property type="match status" value="1"/>
</dbReference>
<dbReference type="Gene3D" id="1.10.287.600">
    <property type="entry name" value="Helix hairpin bin"/>
    <property type="match status" value="1"/>
</dbReference>
<dbReference type="Gene3D" id="3.30.1330.20">
    <property type="entry name" value="Tubulin/FtsZ, C-terminal domain"/>
    <property type="match status" value="1"/>
</dbReference>
<dbReference type="Gene3D" id="3.40.50.1440">
    <property type="entry name" value="Tubulin/FtsZ, GTPase domain"/>
    <property type="match status" value="1"/>
</dbReference>
<dbReference type="InterPro" id="IPR002452">
    <property type="entry name" value="Alpha_tubulin"/>
</dbReference>
<dbReference type="InterPro" id="IPR008280">
    <property type="entry name" value="Tub_FtsZ_C"/>
</dbReference>
<dbReference type="InterPro" id="IPR000217">
    <property type="entry name" value="Tubulin"/>
</dbReference>
<dbReference type="InterPro" id="IPR037103">
    <property type="entry name" value="Tubulin/FtsZ-like_C"/>
</dbReference>
<dbReference type="InterPro" id="IPR018316">
    <property type="entry name" value="Tubulin/FtsZ_2-layer-sand-dom"/>
</dbReference>
<dbReference type="InterPro" id="IPR036525">
    <property type="entry name" value="Tubulin/FtsZ_GTPase_sf"/>
</dbReference>
<dbReference type="InterPro" id="IPR023123">
    <property type="entry name" value="Tubulin_C"/>
</dbReference>
<dbReference type="InterPro" id="IPR017975">
    <property type="entry name" value="Tubulin_CS"/>
</dbReference>
<dbReference type="InterPro" id="IPR003008">
    <property type="entry name" value="Tubulin_FtsZ_GTPase"/>
</dbReference>
<dbReference type="PANTHER" id="PTHR11588">
    <property type="entry name" value="TUBULIN"/>
    <property type="match status" value="1"/>
</dbReference>
<dbReference type="Pfam" id="PF00091">
    <property type="entry name" value="Tubulin"/>
    <property type="match status" value="1"/>
</dbReference>
<dbReference type="Pfam" id="PF03953">
    <property type="entry name" value="Tubulin_C"/>
    <property type="match status" value="1"/>
</dbReference>
<dbReference type="PRINTS" id="PR01162">
    <property type="entry name" value="ALPHATUBULIN"/>
</dbReference>
<dbReference type="PRINTS" id="PR01161">
    <property type="entry name" value="TUBULIN"/>
</dbReference>
<dbReference type="SMART" id="SM00864">
    <property type="entry name" value="Tubulin"/>
    <property type="match status" value="1"/>
</dbReference>
<dbReference type="SMART" id="SM00865">
    <property type="entry name" value="Tubulin_C"/>
    <property type="match status" value="1"/>
</dbReference>
<dbReference type="SUPFAM" id="SSF55307">
    <property type="entry name" value="Tubulin C-terminal domain-like"/>
    <property type="match status" value="1"/>
</dbReference>
<dbReference type="SUPFAM" id="SSF52490">
    <property type="entry name" value="Tubulin nucleotide-binding domain-like"/>
    <property type="match status" value="1"/>
</dbReference>
<dbReference type="PROSITE" id="PS00227">
    <property type="entry name" value="TUBULIN"/>
    <property type="match status" value="1"/>
</dbReference>
<accession>Q9FT36</accession>
<protein>
    <recommendedName>
        <fullName>Tubulin alpha chain</fullName>
        <ecNumber evidence="2">3.6.5.-</ecNumber>
    </recommendedName>
</protein>
<comment type="function">
    <text>Tubulin is the major constituent of microtubules, a cylinder consisting of laterally associated linear protofilaments composed of alpha- and beta-tubulin heterodimers. Microtubules grow by the addition of GTP-tubulin dimers to the microtubule end, where a stabilizing cap forms. Below the cap, tubulin dimers are in GDP-bound state, owing to GTPase activity of alpha-tubulin.</text>
</comment>
<comment type="catalytic activity">
    <reaction evidence="2">
        <text>GTP + H2O = GDP + phosphate + H(+)</text>
        <dbReference type="Rhea" id="RHEA:19669"/>
        <dbReference type="ChEBI" id="CHEBI:15377"/>
        <dbReference type="ChEBI" id="CHEBI:15378"/>
        <dbReference type="ChEBI" id="CHEBI:37565"/>
        <dbReference type="ChEBI" id="CHEBI:43474"/>
        <dbReference type="ChEBI" id="CHEBI:58189"/>
    </reaction>
    <physiologicalReaction direction="left-to-right" evidence="2">
        <dbReference type="Rhea" id="RHEA:19670"/>
    </physiologicalReaction>
</comment>
<comment type="cofactor">
    <cofactor evidence="2">
        <name>Mg(2+)</name>
        <dbReference type="ChEBI" id="CHEBI:18420"/>
    </cofactor>
</comment>
<comment type="subunit">
    <text>Dimer of alpha and beta chains. A typical microtubule is a hollow water-filled tube with an outer diameter of 25 nm and an inner diameter of 15 nM. Alpha-beta heterodimers associate head-to-tail to form protofilaments running lengthwise along the microtubule wall with the beta-tubulin subunit facing the microtubule plus end conferring a structural polarity. Microtubules usually have 13 protofilaments but different protofilament numbers can be found in some organisms and specialized cells.</text>
</comment>
<comment type="subcellular location">
    <subcellularLocation>
        <location>Cytoplasm</location>
        <location>Cytoskeleton</location>
    </subcellularLocation>
</comment>
<comment type="PTM">
    <text evidence="1">Undergoes a tyrosination/detyrosination cycle, the cyclic removal and re-addition of a C-terminal tyrosine residue by the enzymes tubulin tyrosine carboxypeptidase (TTCP) and tubulin tyrosine ligase (TTL), respectively.</text>
</comment>
<comment type="PTM">
    <text evidence="1">Acetylation of alpha chains at Lys-40 stabilizes microtubules and affects affinity and processivity of microtubule motors. This modification has a role in multiple cellular functions, ranging from cell motility, cell cycle progression or cell differentiation to intracellular trafficking and signaling (By similarity).</text>
</comment>
<comment type="similarity">
    <text evidence="4">Belongs to the tubulin family.</text>
</comment>
<name>TBA_DAUCA</name>
<organism>
    <name type="scientific">Daucus carota</name>
    <name type="common">Wild carrot</name>
    <dbReference type="NCBI Taxonomy" id="4039"/>
    <lineage>
        <taxon>Eukaryota</taxon>
        <taxon>Viridiplantae</taxon>
        <taxon>Streptophyta</taxon>
        <taxon>Embryophyta</taxon>
        <taxon>Tracheophyta</taxon>
        <taxon>Spermatophyta</taxon>
        <taxon>Magnoliopsida</taxon>
        <taxon>eudicotyledons</taxon>
        <taxon>Gunneridae</taxon>
        <taxon>Pentapetalae</taxon>
        <taxon>asterids</taxon>
        <taxon>campanulids</taxon>
        <taxon>Apiales</taxon>
        <taxon>Apiaceae</taxon>
        <taxon>Apioideae</taxon>
        <taxon>Scandiceae</taxon>
        <taxon>Daucinae</taxon>
        <taxon>Daucus</taxon>
        <taxon>Daucus sect. Daucus</taxon>
    </lineage>
</organism>